<protein>
    <recommendedName>
        <fullName evidence="1">Holliday junction branch migration complex subunit RuvB</fullName>
        <ecNumber evidence="1">3.6.4.-</ecNumber>
    </recommendedName>
</protein>
<gene>
    <name evidence="1" type="primary">ruvB</name>
    <name type="ordered locus">RBE_0934</name>
</gene>
<name>RUVB_RICBR</name>
<proteinExistence type="inferred from homology"/>
<comment type="function">
    <text evidence="1">The RuvA-RuvB-RuvC complex processes Holliday junction (HJ) DNA during genetic recombination and DNA repair, while the RuvA-RuvB complex plays an important role in the rescue of blocked DNA replication forks via replication fork reversal (RFR). RuvA specifically binds to HJ cruciform DNA, conferring on it an open structure. The RuvB hexamer acts as an ATP-dependent pump, pulling dsDNA into and through the RuvAB complex. RuvB forms 2 homohexamers on either side of HJ DNA bound by 1 or 2 RuvA tetramers; 4 subunits per hexamer contact DNA at a time. Coordinated motions by a converter formed by DNA-disengaged RuvB subunits stimulates ATP hydrolysis and nucleotide exchange. Immobilization of the converter enables RuvB to convert the ATP-contained energy into a lever motion, pulling 2 nucleotides of DNA out of the RuvA tetramer per ATP hydrolyzed, thus driving DNA branch migration. The RuvB motors rotate together with the DNA substrate, which together with the progressing nucleotide cycle form the mechanistic basis for DNA recombination by continuous HJ branch migration. Branch migration allows RuvC to scan DNA until it finds its consensus sequence, where it cleaves and resolves cruciform DNA.</text>
</comment>
<comment type="catalytic activity">
    <reaction evidence="1">
        <text>ATP + H2O = ADP + phosphate + H(+)</text>
        <dbReference type="Rhea" id="RHEA:13065"/>
        <dbReference type="ChEBI" id="CHEBI:15377"/>
        <dbReference type="ChEBI" id="CHEBI:15378"/>
        <dbReference type="ChEBI" id="CHEBI:30616"/>
        <dbReference type="ChEBI" id="CHEBI:43474"/>
        <dbReference type="ChEBI" id="CHEBI:456216"/>
    </reaction>
</comment>
<comment type="subunit">
    <text evidence="1">Homohexamer. Forms an RuvA(8)-RuvB(12)-Holliday junction (HJ) complex. HJ DNA is sandwiched between 2 RuvA tetramers; dsDNA enters through RuvA and exits via RuvB. An RuvB hexamer assembles on each DNA strand where it exits the tetramer. Each RuvB hexamer is contacted by two RuvA subunits (via domain III) on 2 adjacent RuvB subunits; this complex drives branch migration. In the full resolvosome a probable DNA-RuvA(4)-RuvB(12)-RuvC(2) complex forms which resolves the HJ.</text>
</comment>
<comment type="subcellular location">
    <subcellularLocation>
        <location evidence="1">Cytoplasm</location>
    </subcellularLocation>
</comment>
<comment type="domain">
    <text evidence="1">Has 3 domains, the large (RuvB-L) and small ATPase (RuvB-S) domains and the C-terminal head (RuvB-H) domain. The head domain binds DNA, while the ATPase domains jointly bind ATP, ADP or are empty depending on the state of the subunit in the translocation cycle. During a single DNA translocation step the structure of each domain remains the same, but their relative positions change.</text>
</comment>
<comment type="similarity">
    <text evidence="1">Belongs to the RuvB family.</text>
</comment>
<organism>
    <name type="scientific">Rickettsia bellii (strain RML369-C)</name>
    <dbReference type="NCBI Taxonomy" id="336407"/>
    <lineage>
        <taxon>Bacteria</taxon>
        <taxon>Pseudomonadati</taxon>
        <taxon>Pseudomonadota</taxon>
        <taxon>Alphaproteobacteria</taxon>
        <taxon>Rickettsiales</taxon>
        <taxon>Rickettsiaceae</taxon>
        <taxon>Rickettsieae</taxon>
        <taxon>Rickettsia</taxon>
        <taxon>belli group</taxon>
    </lineage>
</organism>
<accession>Q1RHZ9</accession>
<feature type="chain" id="PRO_0000278073" description="Holliday junction branch migration complex subunit RuvB">
    <location>
        <begin position="1"/>
        <end position="342"/>
    </location>
</feature>
<feature type="region of interest" description="Large ATPase domain (RuvB-L)" evidence="1">
    <location>
        <begin position="1"/>
        <end position="179"/>
    </location>
</feature>
<feature type="region of interest" description="Small ATPAse domain (RuvB-S)" evidence="1">
    <location>
        <begin position="180"/>
        <end position="250"/>
    </location>
</feature>
<feature type="region of interest" description="Head domain (RuvB-H)" evidence="1">
    <location>
        <begin position="253"/>
        <end position="342"/>
    </location>
</feature>
<feature type="binding site" evidence="1">
    <location>
        <position position="18"/>
    </location>
    <ligand>
        <name>ATP</name>
        <dbReference type="ChEBI" id="CHEBI:30616"/>
    </ligand>
</feature>
<feature type="binding site" evidence="1">
    <location>
        <position position="19"/>
    </location>
    <ligand>
        <name>ATP</name>
        <dbReference type="ChEBI" id="CHEBI:30616"/>
    </ligand>
</feature>
<feature type="binding site" evidence="1">
    <location>
        <position position="60"/>
    </location>
    <ligand>
        <name>ATP</name>
        <dbReference type="ChEBI" id="CHEBI:30616"/>
    </ligand>
</feature>
<feature type="binding site" evidence="1">
    <location>
        <position position="63"/>
    </location>
    <ligand>
        <name>ATP</name>
        <dbReference type="ChEBI" id="CHEBI:30616"/>
    </ligand>
</feature>
<feature type="binding site" evidence="1">
    <location>
        <position position="64"/>
    </location>
    <ligand>
        <name>ATP</name>
        <dbReference type="ChEBI" id="CHEBI:30616"/>
    </ligand>
</feature>
<feature type="binding site" evidence="1">
    <location>
        <position position="64"/>
    </location>
    <ligand>
        <name>Mg(2+)</name>
        <dbReference type="ChEBI" id="CHEBI:18420"/>
    </ligand>
</feature>
<feature type="binding site" evidence="1">
    <location>
        <position position="65"/>
    </location>
    <ligand>
        <name>ATP</name>
        <dbReference type="ChEBI" id="CHEBI:30616"/>
    </ligand>
</feature>
<feature type="binding site" evidence="1">
    <location>
        <begin position="126"/>
        <end position="128"/>
    </location>
    <ligand>
        <name>ATP</name>
        <dbReference type="ChEBI" id="CHEBI:30616"/>
    </ligand>
</feature>
<feature type="binding site" evidence="1">
    <location>
        <position position="169"/>
    </location>
    <ligand>
        <name>ATP</name>
        <dbReference type="ChEBI" id="CHEBI:30616"/>
    </ligand>
</feature>
<feature type="binding site" evidence="1">
    <location>
        <position position="179"/>
    </location>
    <ligand>
        <name>ATP</name>
        <dbReference type="ChEBI" id="CHEBI:30616"/>
    </ligand>
</feature>
<feature type="binding site" evidence="1">
    <location>
        <position position="216"/>
    </location>
    <ligand>
        <name>ATP</name>
        <dbReference type="ChEBI" id="CHEBI:30616"/>
    </ligand>
</feature>
<feature type="binding site" evidence="1">
    <location>
        <position position="289"/>
    </location>
    <ligand>
        <name>DNA</name>
        <dbReference type="ChEBI" id="CHEBI:16991"/>
    </ligand>
</feature>
<feature type="binding site" evidence="1">
    <location>
        <position position="308"/>
    </location>
    <ligand>
        <name>DNA</name>
        <dbReference type="ChEBI" id="CHEBI:16991"/>
    </ligand>
</feature>
<feature type="binding site" evidence="1">
    <location>
        <position position="313"/>
    </location>
    <ligand>
        <name>DNA</name>
        <dbReference type="ChEBI" id="CHEBI:16991"/>
    </ligand>
</feature>
<reference key="1">
    <citation type="journal article" date="2006" name="PLoS Genet.">
        <title>Genome sequence of Rickettsia bellii illuminates the role of amoebae in gene exchanges between intracellular pathogens.</title>
        <authorList>
            <person name="Ogata H."/>
            <person name="La Scola B."/>
            <person name="Audic S."/>
            <person name="Renesto P."/>
            <person name="Blanc G."/>
            <person name="Robert C."/>
            <person name="Fournier P.-E."/>
            <person name="Claverie J.-M."/>
            <person name="Raoult D."/>
        </authorList>
    </citation>
    <scope>NUCLEOTIDE SEQUENCE [LARGE SCALE GENOMIC DNA]</scope>
    <source>
        <strain>RML369-C</strain>
    </source>
</reference>
<dbReference type="EC" id="3.6.4.-" evidence="1"/>
<dbReference type="EMBL" id="CP000087">
    <property type="protein sequence ID" value="ABE05015.1"/>
    <property type="molecule type" value="Genomic_DNA"/>
</dbReference>
<dbReference type="RefSeq" id="WP_011477596.1">
    <property type="nucleotide sequence ID" value="NC_007940.1"/>
</dbReference>
<dbReference type="SMR" id="Q1RHZ9"/>
<dbReference type="KEGG" id="rbe:RBE_0934"/>
<dbReference type="eggNOG" id="COG2255">
    <property type="taxonomic scope" value="Bacteria"/>
</dbReference>
<dbReference type="HOGENOM" id="CLU_055599_1_0_5"/>
<dbReference type="OrthoDB" id="9804478at2"/>
<dbReference type="Proteomes" id="UP000001951">
    <property type="component" value="Chromosome"/>
</dbReference>
<dbReference type="GO" id="GO:0005737">
    <property type="term" value="C:cytoplasm"/>
    <property type="evidence" value="ECO:0007669"/>
    <property type="project" value="UniProtKB-SubCell"/>
</dbReference>
<dbReference type="GO" id="GO:0048476">
    <property type="term" value="C:Holliday junction resolvase complex"/>
    <property type="evidence" value="ECO:0007669"/>
    <property type="project" value="UniProtKB-UniRule"/>
</dbReference>
<dbReference type="GO" id="GO:0005524">
    <property type="term" value="F:ATP binding"/>
    <property type="evidence" value="ECO:0007669"/>
    <property type="project" value="UniProtKB-UniRule"/>
</dbReference>
<dbReference type="GO" id="GO:0016887">
    <property type="term" value="F:ATP hydrolysis activity"/>
    <property type="evidence" value="ECO:0007669"/>
    <property type="project" value="InterPro"/>
</dbReference>
<dbReference type="GO" id="GO:0000400">
    <property type="term" value="F:four-way junction DNA binding"/>
    <property type="evidence" value="ECO:0007669"/>
    <property type="project" value="UniProtKB-UniRule"/>
</dbReference>
<dbReference type="GO" id="GO:0009378">
    <property type="term" value="F:four-way junction helicase activity"/>
    <property type="evidence" value="ECO:0007669"/>
    <property type="project" value="InterPro"/>
</dbReference>
<dbReference type="GO" id="GO:0006310">
    <property type="term" value="P:DNA recombination"/>
    <property type="evidence" value="ECO:0007669"/>
    <property type="project" value="UniProtKB-UniRule"/>
</dbReference>
<dbReference type="GO" id="GO:0006281">
    <property type="term" value="P:DNA repair"/>
    <property type="evidence" value="ECO:0007669"/>
    <property type="project" value="UniProtKB-UniRule"/>
</dbReference>
<dbReference type="CDD" id="cd00009">
    <property type="entry name" value="AAA"/>
    <property type="match status" value="1"/>
</dbReference>
<dbReference type="Gene3D" id="1.10.8.60">
    <property type="match status" value="1"/>
</dbReference>
<dbReference type="Gene3D" id="3.40.50.300">
    <property type="entry name" value="P-loop containing nucleotide triphosphate hydrolases"/>
    <property type="match status" value="1"/>
</dbReference>
<dbReference type="Gene3D" id="1.10.10.10">
    <property type="entry name" value="Winged helix-like DNA-binding domain superfamily/Winged helix DNA-binding domain"/>
    <property type="match status" value="1"/>
</dbReference>
<dbReference type="HAMAP" id="MF_00016">
    <property type="entry name" value="DNA_HJ_migration_RuvB"/>
    <property type="match status" value="1"/>
</dbReference>
<dbReference type="InterPro" id="IPR003593">
    <property type="entry name" value="AAA+_ATPase"/>
</dbReference>
<dbReference type="InterPro" id="IPR041445">
    <property type="entry name" value="AAA_lid_4"/>
</dbReference>
<dbReference type="InterPro" id="IPR004605">
    <property type="entry name" value="DNA_helicase_Holl-junc_RuvB"/>
</dbReference>
<dbReference type="InterPro" id="IPR027417">
    <property type="entry name" value="P-loop_NTPase"/>
</dbReference>
<dbReference type="InterPro" id="IPR008824">
    <property type="entry name" value="RuvB-like_N"/>
</dbReference>
<dbReference type="InterPro" id="IPR008823">
    <property type="entry name" value="RuvB_C"/>
</dbReference>
<dbReference type="InterPro" id="IPR036388">
    <property type="entry name" value="WH-like_DNA-bd_sf"/>
</dbReference>
<dbReference type="InterPro" id="IPR036390">
    <property type="entry name" value="WH_DNA-bd_sf"/>
</dbReference>
<dbReference type="NCBIfam" id="NF000868">
    <property type="entry name" value="PRK00080.1"/>
    <property type="match status" value="1"/>
</dbReference>
<dbReference type="NCBIfam" id="TIGR00635">
    <property type="entry name" value="ruvB"/>
    <property type="match status" value="1"/>
</dbReference>
<dbReference type="PANTHER" id="PTHR42848">
    <property type="match status" value="1"/>
</dbReference>
<dbReference type="PANTHER" id="PTHR42848:SF1">
    <property type="entry name" value="HOLLIDAY JUNCTION BRANCH MIGRATION COMPLEX SUBUNIT RUVB"/>
    <property type="match status" value="1"/>
</dbReference>
<dbReference type="Pfam" id="PF17864">
    <property type="entry name" value="AAA_lid_4"/>
    <property type="match status" value="1"/>
</dbReference>
<dbReference type="Pfam" id="PF05491">
    <property type="entry name" value="RuvB_C"/>
    <property type="match status" value="1"/>
</dbReference>
<dbReference type="Pfam" id="PF05496">
    <property type="entry name" value="RuvB_N"/>
    <property type="match status" value="1"/>
</dbReference>
<dbReference type="SMART" id="SM00382">
    <property type="entry name" value="AAA"/>
    <property type="match status" value="1"/>
</dbReference>
<dbReference type="SUPFAM" id="SSF52540">
    <property type="entry name" value="P-loop containing nucleoside triphosphate hydrolases"/>
    <property type="match status" value="1"/>
</dbReference>
<dbReference type="SUPFAM" id="SSF46785">
    <property type="entry name" value="Winged helix' DNA-binding domain"/>
    <property type="match status" value="1"/>
</dbReference>
<sequence length="342" mass="38263">MTSILSPEKSQNDQELPLRPSYLQEFVGQQQIKENLSVFIRAAKSRGEHLDHTLFYGPPGLGKTTLAKIISNEIGGNFKSTSGPAILKAADLAAILTNLEKNDVLFIDEIHRLNTSVEEVLYPAMEDFELDIIIGEGPAARSVKINLPQFTLIGATTRLGLLSNPLRDRFGIPMRLNFYNTEELKKVLNRASKLLDIDLTDSGSEEIARRSRGTPRIALRLLRRIRDFAAVNNQLEIDKEIANFGLNRLEVDIIGLDSNDYRYLKFIADNYNGGPVGIETIAAALSEQRDALEETIEPYLIQIGLLQRTPRGRVITATAFEHLKIPLPTSPTHQFNIFNDNE</sequence>
<keyword id="KW-0067">ATP-binding</keyword>
<keyword id="KW-0963">Cytoplasm</keyword>
<keyword id="KW-0227">DNA damage</keyword>
<keyword id="KW-0233">DNA recombination</keyword>
<keyword id="KW-0234">DNA repair</keyword>
<keyword id="KW-0238">DNA-binding</keyword>
<keyword id="KW-0378">Hydrolase</keyword>
<keyword id="KW-0547">Nucleotide-binding</keyword>
<evidence type="ECO:0000255" key="1">
    <source>
        <dbReference type="HAMAP-Rule" id="MF_00016"/>
    </source>
</evidence>